<feature type="signal peptide" evidence="1">
    <location>
        <begin position="1"/>
        <end position="14"/>
    </location>
</feature>
<feature type="chain" id="PRO_0000446766" description="U-scoloptoxin(11)-Sa2a" evidence="3">
    <location>
        <begin position="15"/>
        <end position="229"/>
    </location>
</feature>
<proteinExistence type="evidence at transcript level"/>
<accession>P0DPZ6</accession>
<sequence>MFLLLGFIFLAAEAFNFQLRNAMESKELFKKRELTTEDELATCNSDSICGYLQNNVKGTNYVPLCACPGEIRCPRSWDSNDGKSLTRGNEQFKFCSSSPQDLHDCKANELVFTAVYEYLSNVNPKKFAAYTGNIHCKCPDEFAYNLFNRTKKATADREIHTVYFSCQEYNICGSNDTCHIISESPDNFHIYKICNCDNGLQCSDNPDAAFKTVKLEQGPLFNQYSMRCQ</sequence>
<name>TXB2A_SCOAL</name>
<evidence type="ECO:0000255" key="1"/>
<evidence type="ECO:0000303" key="2">
    <source>
    </source>
</evidence>
<evidence type="ECO:0000305" key="3"/>
<evidence type="ECO:0000305" key="4">
    <source>
    </source>
</evidence>
<organism>
    <name type="scientific">Scolopendra alternans</name>
    <name type="common">Florida Keys giant centipede</name>
    <dbReference type="NCBI Taxonomy" id="1329349"/>
    <lineage>
        <taxon>Eukaryota</taxon>
        <taxon>Metazoa</taxon>
        <taxon>Ecdysozoa</taxon>
        <taxon>Arthropoda</taxon>
        <taxon>Myriapoda</taxon>
        <taxon>Chilopoda</taxon>
        <taxon>Pleurostigmophora</taxon>
        <taxon>Scolopendromorpha</taxon>
        <taxon>Scolopendridae</taxon>
        <taxon>Scolopendra</taxon>
    </lineage>
</organism>
<protein>
    <recommendedName>
        <fullName evidence="2">U-scoloptoxin(11)-Sa2a</fullName>
        <shortName evidence="2">U-SLPTX(11)-Sa2a</shortName>
    </recommendedName>
</protein>
<dbReference type="SMR" id="P0DPZ6"/>
<dbReference type="GO" id="GO:0005576">
    <property type="term" value="C:extracellular region"/>
    <property type="evidence" value="ECO:0007669"/>
    <property type="project" value="UniProtKB-SubCell"/>
</dbReference>
<dbReference type="GO" id="GO:0090729">
    <property type="term" value="F:toxin activity"/>
    <property type="evidence" value="ECO:0007669"/>
    <property type="project" value="UniProtKB-KW"/>
</dbReference>
<dbReference type="Gene3D" id="2.20.20.160">
    <property type="match status" value="1"/>
</dbReference>
<keyword id="KW-1015">Disulfide bond</keyword>
<keyword id="KW-0964">Secreted</keyword>
<keyword id="KW-0732">Signal</keyword>
<keyword id="KW-0800">Toxin</keyword>
<comment type="subcellular location">
    <subcellularLocation>
        <location evidence="4">Secreted</location>
    </subcellularLocation>
</comment>
<comment type="tissue specificity">
    <text evidence="4">Expressed by the venom gland.</text>
</comment>
<comment type="PTM">
    <text evidence="3">Contains 8 disulfide bonds.</text>
</comment>
<comment type="similarity">
    <text evidence="3">Belongs to the scoloptoxin-11 family.</text>
</comment>
<comment type="online information" name="National Center for Biotechnology Information (NCBI)">
    <link uri="https://www.ncbi.nlm.nih.gov/nuccore/GASK01000037"/>
</comment>
<reference key="1">
    <citation type="journal article" date="2014" name="Mol. Biol. Evol.">
        <title>Clawing through evolution: toxin diversification and convergence in the ancient lineage Chilopoda (centipedes).</title>
        <authorList>
            <person name="Undheim E.A."/>
            <person name="Jones A."/>
            <person name="Clauser K.R."/>
            <person name="Holland J.W."/>
            <person name="Pineda S.S."/>
            <person name="King G.F."/>
            <person name="Fry B.G."/>
        </authorList>
    </citation>
    <scope>NUCLEOTIDE SEQUENCE [MRNA]</scope>
    <scope>NOMENCLATURE</scope>
    <source>
        <tissue>Venom gland</tissue>
    </source>
</reference>